<comment type="function">
    <text evidence="4">Copper amine oxidase that can use putrescine and spermidine as substrates.</text>
</comment>
<comment type="catalytic activity">
    <reaction evidence="4">
        <text>a primary methyl amine + O2 + H2O = an aldehyde + H2O2 + NH4(+)</text>
        <dbReference type="Rhea" id="RHEA:16153"/>
        <dbReference type="ChEBI" id="CHEBI:15377"/>
        <dbReference type="ChEBI" id="CHEBI:15379"/>
        <dbReference type="ChEBI" id="CHEBI:16240"/>
        <dbReference type="ChEBI" id="CHEBI:17478"/>
        <dbReference type="ChEBI" id="CHEBI:28938"/>
        <dbReference type="ChEBI" id="CHEBI:228804"/>
        <dbReference type="EC" id="1.4.3.21"/>
    </reaction>
    <physiologicalReaction direction="left-to-right" evidence="4">
        <dbReference type="Rhea" id="RHEA:16154"/>
    </physiologicalReaction>
</comment>
<comment type="cofactor">
    <cofactor evidence="2">
        <name>Cu cation</name>
        <dbReference type="ChEBI" id="CHEBI:23378"/>
    </cofactor>
    <cofactor evidence="1">
        <name>Zn(2+)</name>
        <dbReference type="ChEBI" id="CHEBI:29105"/>
    </cofactor>
    <text evidence="1 2">Binds 1 copper ion per subunit (By similarity). Can also use zinc ion as cofactor (By similarity).</text>
</comment>
<comment type="cofactor">
    <cofactor evidence="2">
        <name>L-topaquinone</name>
        <dbReference type="ChEBI" id="CHEBI:79027"/>
    </cofactor>
    <text evidence="2">Contains 1 topaquinone per subunit.</text>
</comment>
<comment type="cofactor">
    <cofactor evidence="3">
        <name>Mn(2+)</name>
        <dbReference type="ChEBI" id="CHEBI:29035"/>
    </cofactor>
    <text evidence="3">Binds 1 Mn(2+) ion per subunit.</text>
</comment>
<comment type="pathway">
    <text evidence="4">Amine and polyamine degradation; putrescine degradation.</text>
</comment>
<comment type="subunit">
    <text evidence="2">Homodimer.</text>
</comment>
<comment type="subcellular location">
    <subcellularLocation>
        <location evidence="4">Secreted</location>
        <location evidence="4">Extracellular space</location>
        <location evidence="4">Apoplast</location>
    </subcellularLocation>
</comment>
<comment type="tissue specificity">
    <text evidence="7">Expressed in roots, leaves and cotyledons.</text>
</comment>
<comment type="developmental stage">
    <text evidence="7">In young seedlings, expressed in hydathodes of new emerging leaves and cotyledons as well as in columella cells (PubMed:31862580). Also observed in hypocotyl/root junction, hypocotyls and in root apex (PubMed:31862580).</text>
</comment>
<comment type="induction">
    <text evidence="7">Induced transiently by auxin (IAA) (PubMed:31862580). Induced during wounding, dehydration recovery, and treatment with putrescine (Put) (PubMed:31862580). Slightly and transiently repressed by jasmonic acid (MeJA), abscisic acid (ABA) and salicylic acid (SA), and drought (PubMed:31862580).</text>
</comment>
<comment type="PTM">
    <text evidence="2">Topaquinone (TPQ) is generated by copper-dependent autoxidation of a specific tyrosyl residue.</text>
</comment>
<comment type="similarity">
    <text evidence="9">Belongs to the copper/topaquinone oxidase family.</text>
</comment>
<protein>
    <recommendedName>
        <fullName evidence="8">Amine oxidase [copper-containing] gamma 2</fullName>
        <shortName evidence="8">AtCuAOgamma2</shortName>
        <ecNumber evidence="4">1.4.3.21</ecNumber>
    </recommendedName>
</protein>
<evidence type="ECO:0000250" key="1">
    <source>
        <dbReference type="UniProtKB" id="P12807"/>
    </source>
</evidence>
<evidence type="ECO:0000250" key="2">
    <source>
        <dbReference type="UniProtKB" id="P46883"/>
    </source>
</evidence>
<evidence type="ECO:0000250" key="3">
    <source>
        <dbReference type="UniProtKB" id="Q43077"/>
    </source>
</evidence>
<evidence type="ECO:0000250" key="4">
    <source>
        <dbReference type="UniProtKB" id="Q8H1H9"/>
    </source>
</evidence>
<evidence type="ECO:0000255" key="5"/>
<evidence type="ECO:0000255" key="6">
    <source>
        <dbReference type="PROSITE-ProRule" id="PRU00498"/>
    </source>
</evidence>
<evidence type="ECO:0000269" key="7">
    <source>
    </source>
</evidence>
<evidence type="ECO:0000303" key="8">
    <source>
    </source>
</evidence>
<evidence type="ECO:0000305" key="9"/>
<evidence type="ECO:0000312" key="10">
    <source>
        <dbReference type="Araport" id="AT3G43670"/>
    </source>
</evidence>
<evidence type="ECO:0000312" key="11">
    <source>
        <dbReference type="EMBL" id="CAB83068.1"/>
    </source>
</evidence>
<reference key="1">
    <citation type="journal article" date="2000" name="Nature">
        <title>Sequence and analysis of chromosome 3 of the plant Arabidopsis thaliana.</title>
        <authorList>
            <person name="Salanoubat M."/>
            <person name="Lemcke K."/>
            <person name="Rieger M."/>
            <person name="Ansorge W."/>
            <person name="Unseld M."/>
            <person name="Fartmann B."/>
            <person name="Valle G."/>
            <person name="Bloecker H."/>
            <person name="Perez-Alonso M."/>
            <person name="Obermaier B."/>
            <person name="Delseny M."/>
            <person name="Boutry M."/>
            <person name="Grivell L.A."/>
            <person name="Mache R."/>
            <person name="Puigdomenech P."/>
            <person name="De Simone V."/>
            <person name="Choisne N."/>
            <person name="Artiguenave F."/>
            <person name="Robert C."/>
            <person name="Brottier P."/>
            <person name="Wincker P."/>
            <person name="Cattolico L."/>
            <person name="Weissenbach J."/>
            <person name="Saurin W."/>
            <person name="Quetier F."/>
            <person name="Schaefer M."/>
            <person name="Mueller-Auer S."/>
            <person name="Gabel C."/>
            <person name="Fuchs M."/>
            <person name="Benes V."/>
            <person name="Wurmbach E."/>
            <person name="Drzonek H."/>
            <person name="Erfle H."/>
            <person name="Jordan N."/>
            <person name="Bangert S."/>
            <person name="Wiedelmann R."/>
            <person name="Kranz H."/>
            <person name="Voss H."/>
            <person name="Holland R."/>
            <person name="Brandt P."/>
            <person name="Nyakatura G."/>
            <person name="Vezzi A."/>
            <person name="D'Angelo M."/>
            <person name="Pallavicini A."/>
            <person name="Toppo S."/>
            <person name="Simionati B."/>
            <person name="Conrad A."/>
            <person name="Hornischer K."/>
            <person name="Kauer G."/>
            <person name="Loehnert T.-H."/>
            <person name="Nordsiek G."/>
            <person name="Reichelt J."/>
            <person name="Scharfe M."/>
            <person name="Schoen O."/>
            <person name="Bargues M."/>
            <person name="Terol J."/>
            <person name="Climent J."/>
            <person name="Navarro P."/>
            <person name="Collado C."/>
            <person name="Perez-Perez A."/>
            <person name="Ottenwaelder B."/>
            <person name="Duchemin D."/>
            <person name="Cooke R."/>
            <person name="Laudie M."/>
            <person name="Berger-Llauro C."/>
            <person name="Purnelle B."/>
            <person name="Masuy D."/>
            <person name="de Haan M."/>
            <person name="Maarse A.C."/>
            <person name="Alcaraz J.-P."/>
            <person name="Cottet A."/>
            <person name="Casacuberta E."/>
            <person name="Monfort A."/>
            <person name="Argiriou A."/>
            <person name="Flores M."/>
            <person name="Liguori R."/>
            <person name="Vitale D."/>
            <person name="Mannhaupt G."/>
            <person name="Haase D."/>
            <person name="Schoof H."/>
            <person name="Rudd S."/>
            <person name="Zaccaria P."/>
            <person name="Mewes H.-W."/>
            <person name="Mayer K.F.X."/>
            <person name="Kaul S."/>
            <person name="Town C.D."/>
            <person name="Koo H.L."/>
            <person name="Tallon L.J."/>
            <person name="Jenkins J."/>
            <person name="Rooney T."/>
            <person name="Rizzo M."/>
            <person name="Walts A."/>
            <person name="Utterback T."/>
            <person name="Fujii C.Y."/>
            <person name="Shea T.P."/>
            <person name="Creasy T.H."/>
            <person name="Haas B."/>
            <person name="Maiti R."/>
            <person name="Wu D."/>
            <person name="Peterson J."/>
            <person name="Van Aken S."/>
            <person name="Pai G."/>
            <person name="Militscher J."/>
            <person name="Sellers P."/>
            <person name="Gill J.E."/>
            <person name="Feldblyum T.V."/>
            <person name="Preuss D."/>
            <person name="Lin X."/>
            <person name="Nierman W.C."/>
            <person name="Salzberg S.L."/>
            <person name="White O."/>
            <person name="Venter J.C."/>
            <person name="Fraser C.M."/>
            <person name="Kaneko T."/>
            <person name="Nakamura Y."/>
            <person name="Sato S."/>
            <person name="Kato T."/>
            <person name="Asamizu E."/>
            <person name="Sasamoto S."/>
            <person name="Kimura T."/>
            <person name="Idesawa K."/>
            <person name="Kawashima K."/>
            <person name="Kishida Y."/>
            <person name="Kiyokawa C."/>
            <person name="Kohara M."/>
            <person name="Matsumoto M."/>
            <person name="Matsuno A."/>
            <person name="Muraki A."/>
            <person name="Nakayama S."/>
            <person name="Nakazaki N."/>
            <person name="Shinpo S."/>
            <person name="Takeuchi C."/>
            <person name="Wada T."/>
            <person name="Watanabe A."/>
            <person name="Yamada M."/>
            <person name="Yasuda M."/>
            <person name="Tabata S."/>
        </authorList>
    </citation>
    <scope>NUCLEOTIDE SEQUENCE [LARGE SCALE GENOMIC DNA]</scope>
    <source>
        <strain>cv. Columbia</strain>
    </source>
</reference>
<reference key="2">
    <citation type="journal article" date="2017" name="Plant J.">
        <title>Araport11: a complete reannotation of the Arabidopsis thaliana reference genome.</title>
        <authorList>
            <person name="Cheng C.Y."/>
            <person name="Krishnakumar V."/>
            <person name="Chan A.P."/>
            <person name="Thibaud-Nissen F."/>
            <person name="Schobel S."/>
            <person name="Town C.D."/>
        </authorList>
    </citation>
    <scope>GENOME REANNOTATION</scope>
    <source>
        <strain>cv. Columbia</strain>
    </source>
</reference>
<reference key="3">
    <citation type="journal article" date="2003" name="Science">
        <title>Empirical analysis of transcriptional activity in the Arabidopsis genome.</title>
        <authorList>
            <person name="Yamada K."/>
            <person name="Lim J."/>
            <person name="Dale J.M."/>
            <person name="Chen H."/>
            <person name="Shinn P."/>
            <person name="Palm C.J."/>
            <person name="Southwick A.M."/>
            <person name="Wu H.C."/>
            <person name="Kim C.J."/>
            <person name="Nguyen M."/>
            <person name="Pham P.K."/>
            <person name="Cheuk R.F."/>
            <person name="Karlin-Newmann G."/>
            <person name="Liu S.X."/>
            <person name="Lam B."/>
            <person name="Sakano H."/>
            <person name="Wu T."/>
            <person name="Yu G."/>
            <person name="Miranda M."/>
            <person name="Quach H.L."/>
            <person name="Tripp M."/>
            <person name="Chang C.H."/>
            <person name="Lee J.M."/>
            <person name="Toriumi M.J."/>
            <person name="Chan M.M."/>
            <person name="Tang C.C."/>
            <person name="Onodera C.S."/>
            <person name="Deng J.M."/>
            <person name="Akiyama K."/>
            <person name="Ansari Y."/>
            <person name="Arakawa T."/>
            <person name="Banh J."/>
            <person name="Banno F."/>
            <person name="Bowser L."/>
            <person name="Brooks S.Y."/>
            <person name="Carninci P."/>
            <person name="Chao Q."/>
            <person name="Choy N."/>
            <person name="Enju A."/>
            <person name="Goldsmith A.D."/>
            <person name="Gurjal M."/>
            <person name="Hansen N.F."/>
            <person name="Hayashizaki Y."/>
            <person name="Johnson-Hopson C."/>
            <person name="Hsuan V.W."/>
            <person name="Iida K."/>
            <person name="Karnes M."/>
            <person name="Khan S."/>
            <person name="Koesema E."/>
            <person name="Ishida J."/>
            <person name="Jiang P.X."/>
            <person name="Jones T."/>
            <person name="Kawai J."/>
            <person name="Kamiya A."/>
            <person name="Meyers C."/>
            <person name="Nakajima M."/>
            <person name="Narusaka M."/>
            <person name="Seki M."/>
            <person name="Sakurai T."/>
            <person name="Satou M."/>
            <person name="Tamse R."/>
            <person name="Vaysberg M."/>
            <person name="Wallender E.K."/>
            <person name="Wong C."/>
            <person name="Yamamura Y."/>
            <person name="Yuan S."/>
            <person name="Shinozaki K."/>
            <person name="Davis R.W."/>
            <person name="Theologis A."/>
            <person name="Ecker J.R."/>
        </authorList>
    </citation>
    <scope>NUCLEOTIDE SEQUENCE [LARGE SCALE MRNA]</scope>
    <source>
        <strain>cv. Columbia</strain>
    </source>
</reference>
<reference key="4">
    <citation type="journal article" date="2020" name="Plant Physiol. Biochem.">
        <title>Developmental, hormone- and stress-modulated expression profiles of four members of the Arabidopsis copper-amine oxidase gene family.</title>
        <authorList>
            <person name="Fraudentali I."/>
            <person name="Ghuge S.A."/>
            <person name="Carucci A."/>
            <person name="Tavladoraki P."/>
            <person name="Angelini R."/>
            <person name="Rodrigues-Pousada R.A."/>
            <person name="Cona A."/>
        </authorList>
    </citation>
    <scope>TISSUE SPECIFICITY</scope>
    <scope>DEVELOPMENTAL STAGE</scope>
    <scope>INDUCTION BY JASMONATE; ABSCISIC ACID; SALICYLIC ACID; DEHYDRATION RECOVERY; WOUNDING; PUTRESCINE AND AUXIN</scope>
    <scope>GENE FAMILY</scope>
    <scope>NOMENCLATURE</scope>
    <source>
        <strain>cv. Columbia</strain>
    </source>
</reference>
<gene>
    <name evidence="8" type="primary">CuAOgamma2</name>
    <name evidence="10" type="ordered locus">At3g43670</name>
    <name evidence="11" type="ORF">F23N14.50</name>
</gene>
<sequence>MVELSFSQLLVLLLSLLFLFTTLASSSKTPRFKYSLEKPHHPLDPLTTPEIKRVQTILSGHDPGFGSGSTIIHAMALDEPDKQRVIRWKKGDRLPPRRAEILAMSNGESHVLTVDLKSGRVVSDLVNPTFGYPILTMKDIIAVSQVPYKSVEFNRSIEARGIPFSGLICITPFAGWYGPDEEGRRVIKIQCFSKQDTVNFYMRPIEGLYLTVDMDKLEIIKIVDNGPVPVPKSTGTEYRYGFLNETVYMDRVNPMSMEQPDGPSFQVEDGYLVKWANWKFHIKPDQRAGMIISQATVRDSKTGEARSVMYKGFASELFVPNMDPGEGWYSKAYMDAGEFGLGPSSMPLVPLNDCPRNAYYIDGFFASPEGIPILQPNMICLFERYAGDTSWRHSEILLPGVDIRESRAKVTLVARMACSVGNYDYIFDWEFQMDGVIRVTVAASGMLMVKGTAYENVEDLGEKEDDSGPLISENVIGVVHDHFISFHLDMDIDGSANNSFVKVHLEKQRLPPGESRRKSYLKVKKYVAKTEKDAQIKMSLYDPYEFHLVNPNRLSRLGNPAGYKLVPGGNAASLLDHDDPPQMRGAFTNNQIWVTRYNRSEQWAGGLLMYQSRGEDTLQVWSDRDRSIENKDIVLWYTLGFHHVPCQEDFPVMPTIASSFELKPVNFFESNPVLGISPFFEKDLPVC</sequence>
<feature type="signal peptide" evidence="5">
    <location>
        <begin position="1"/>
        <end position="24"/>
    </location>
</feature>
<feature type="chain" id="PRO_5015099887" description="Amine oxidase [copper-containing] gamma 2">
    <location>
        <begin position="25"/>
        <end position="687"/>
    </location>
</feature>
<feature type="active site" description="Proton acceptor" evidence="1">
    <location>
        <position position="335"/>
    </location>
</feature>
<feature type="active site" description="Schiff-base intermediate with substrate; via topaquinone" evidence="1">
    <location>
        <position position="423"/>
    </location>
</feature>
<feature type="binding site" evidence="1">
    <location>
        <begin position="333"/>
        <end position="344"/>
    </location>
    <ligand>
        <name>substrate</name>
    </ligand>
</feature>
<feature type="binding site" evidence="2">
    <location>
        <begin position="420"/>
        <end position="425"/>
    </location>
    <ligand>
        <name>substrate</name>
    </ligand>
</feature>
<feature type="binding site" evidence="1">
    <location>
        <position position="480"/>
    </location>
    <ligand>
        <name>Cu cation</name>
        <dbReference type="ChEBI" id="CHEBI:23378"/>
    </ligand>
</feature>
<feature type="binding site" evidence="1">
    <location>
        <position position="482"/>
    </location>
    <ligand>
        <name>Cu cation</name>
        <dbReference type="ChEBI" id="CHEBI:23378"/>
    </ligand>
</feature>
<feature type="binding site" evidence="3">
    <location>
        <position position="489"/>
    </location>
    <ligand>
        <name>Mn(2+)</name>
        <dbReference type="ChEBI" id="CHEBI:29035"/>
    </ligand>
</feature>
<feature type="binding site" evidence="3">
    <location>
        <position position="490"/>
    </location>
    <ligand>
        <name>Mn(2+)</name>
        <dbReference type="ChEBI" id="CHEBI:29035"/>
    </ligand>
</feature>
<feature type="binding site" evidence="3">
    <location>
        <position position="491"/>
    </location>
    <ligand>
        <name>Mn(2+)</name>
        <dbReference type="ChEBI" id="CHEBI:29035"/>
    </ligand>
</feature>
<feature type="binding site" evidence="3">
    <location>
        <position position="632"/>
    </location>
    <ligand>
        <name>Mn(2+)</name>
        <dbReference type="ChEBI" id="CHEBI:29035"/>
    </ligand>
</feature>
<feature type="binding site" evidence="3">
    <location>
        <position position="633"/>
    </location>
    <ligand>
        <name>Mn(2+)</name>
        <dbReference type="ChEBI" id="CHEBI:29035"/>
    </ligand>
</feature>
<feature type="binding site" evidence="1">
    <location>
        <position position="643"/>
    </location>
    <ligand>
        <name>Cu cation</name>
        <dbReference type="ChEBI" id="CHEBI:23378"/>
    </ligand>
</feature>
<feature type="modified residue" description="2',4',5'-topaquinone" evidence="1">
    <location>
        <position position="423"/>
    </location>
</feature>
<feature type="glycosylation site" description="N-linked (GlcNAc...) asparagine" evidence="6">
    <location>
        <position position="154"/>
    </location>
</feature>
<feature type="glycosylation site" description="N-linked (GlcNAc...) asparagine" evidence="6">
    <location>
        <position position="244"/>
    </location>
</feature>
<feature type="glycosylation site" description="N-linked (GlcNAc...) asparagine" evidence="6">
    <location>
        <position position="497"/>
    </location>
</feature>
<feature type="glycosylation site" description="N-linked (GlcNAc...) asparagine" evidence="6">
    <location>
        <position position="598"/>
    </location>
</feature>
<feature type="disulfide bond" evidence="3">
    <location>
        <begin position="169"/>
        <end position="191"/>
    </location>
</feature>
<feature type="disulfide bond" evidence="1">
    <location>
        <begin position="354"/>
        <end position="380"/>
    </location>
</feature>
<keyword id="KW-0052">Apoplast</keyword>
<keyword id="KW-0186">Copper</keyword>
<keyword id="KW-1015">Disulfide bond</keyword>
<keyword id="KW-0325">Glycoprotein</keyword>
<keyword id="KW-0464">Manganese</keyword>
<keyword id="KW-0479">Metal-binding</keyword>
<keyword id="KW-0560">Oxidoreductase</keyword>
<keyword id="KW-1185">Reference proteome</keyword>
<keyword id="KW-0964">Secreted</keyword>
<keyword id="KW-0732">Signal</keyword>
<keyword id="KW-0801">TPQ</keyword>
<dbReference type="EC" id="1.4.3.21" evidence="4"/>
<dbReference type="EMBL" id="AL138638">
    <property type="protein sequence ID" value="CAB83068.1"/>
    <property type="molecule type" value="Genomic_DNA"/>
</dbReference>
<dbReference type="EMBL" id="CP002686">
    <property type="protein sequence ID" value="AEE77817.1"/>
    <property type="molecule type" value="Genomic_DNA"/>
</dbReference>
<dbReference type="EMBL" id="AY095989">
    <property type="protein sequence ID" value="AAM19946.1"/>
    <property type="molecule type" value="mRNA"/>
</dbReference>
<dbReference type="EMBL" id="BT005817">
    <property type="protein sequence ID" value="AAO64752.1"/>
    <property type="molecule type" value="mRNA"/>
</dbReference>
<dbReference type="PIR" id="T47403">
    <property type="entry name" value="T47403"/>
</dbReference>
<dbReference type="RefSeq" id="NP_189953.1">
    <property type="nucleotide sequence ID" value="NM_114235.4"/>
</dbReference>
<dbReference type="SMR" id="Q9M2B9"/>
<dbReference type="FunCoup" id="Q9M2B9">
    <property type="interactions" value="115"/>
</dbReference>
<dbReference type="STRING" id="3702.Q9M2B9"/>
<dbReference type="GlyCosmos" id="Q9M2B9">
    <property type="glycosylation" value="4 sites, No reported glycans"/>
</dbReference>
<dbReference type="GlyGen" id="Q9M2B9">
    <property type="glycosylation" value="5 sites"/>
</dbReference>
<dbReference type="PaxDb" id="3702-AT3G43670.1"/>
<dbReference type="ProteomicsDB" id="177325"/>
<dbReference type="EnsemblPlants" id="AT3G43670.1">
    <property type="protein sequence ID" value="AT3G43670.1"/>
    <property type="gene ID" value="AT3G43670"/>
</dbReference>
<dbReference type="GeneID" id="823469"/>
<dbReference type="Gramene" id="AT3G43670.1">
    <property type="protein sequence ID" value="AT3G43670.1"/>
    <property type="gene ID" value="AT3G43670"/>
</dbReference>
<dbReference type="KEGG" id="ath:AT3G43670"/>
<dbReference type="Araport" id="AT3G43670"/>
<dbReference type="TAIR" id="AT3G43670">
    <property type="gene designation" value="CUAOGAMMA2"/>
</dbReference>
<dbReference type="eggNOG" id="KOG1186">
    <property type="taxonomic scope" value="Eukaryota"/>
</dbReference>
<dbReference type="HOGENOM" id="CLU_011500_5_4_1"/>
<dbReference type="InParanoid" id="Q9M2B9"/>
<dbReference type="OMA" id="HYAYPIP"/>
<dbReference type="BioCyc" id="ARA:AT3G43670-MONOMER"/>
<dbReference type="UniPathway" id="UPA00188"/>
<dbReference type="PRO" id="PR:Q9M2B9"/>
<dbReference type="Proteomes" id="UP000006548">
    <property type="component" value="Chromosome 3"/>
</dbReference>
<dbReference type="ExpressionAtlas" id="Q9M2B9">
    <property type="expression patterns" value="baseline and differential"/>
</dbReference>
<dbReference type="GO" id="GO:0048046">
    <property type="term" value="C:apoplast"/>
    <property type="evidence" value="ECO:0007669"/>
    <property type="project" value="UniProtKB-SubCell"/>
</dbReference>
<dbReference type="GO" id="GO:0005507">
    <property type="term" value="F:copper ion binding"/>
    <property type="evidence" value="ECO:0007669"/>
    <property type="project" value="InterPro"/>
</dbReference>
<dbReference type="GO" id="GO:0008131">
    <property type="term" value="F:primary methylamine oxidase activity"/>
    <property type="evidence" value="ECO:0007669"/>
    <property type="project" value="UniProtKB-EC"/>
</dbReference>
<dbReference type="GO" id="GO:0048038">
    <property type="term" value="F:quinone binding"/>
    <property type="evidence" value="ECO:0007669"/>
    <property type="project" value="InterPro"/>
</dbReference>
<dbReference type="GO" id="GO:0009447">
    <property type="term" value="P:putrescine catabolic process"/>
    <property type="evidence" value="ECO:0007669"/>
    <property type="project" value="UniProtKB-UniPathway"/>
</dbReference>
<dbReference type="GO" id="GO:0009737">
    <property type="term" value="P:response to abscisic acid"/>
    <property type="evidence" value="ECO:0000270"/>
    <property type="project" value="UniProtKB"/>
</dbReference>
<dbReference type="GO" id="GO:0009733">
    <property type="term" value="P:response to auxin"/>
    <property type="evidence" value="ECO:0000270"/>
    <property type="project" value="UniProtKB"/>
</dbReference>
<dbReference type="GO" id="GO:0009753">
    <property type="term" value="P:response to jasmonic acid"/>
    <property type="evidence" value="ECO:0000270"/>
    <property type="project" value="UniProtKB"/>
</dbReference>
<dbReference type="GO" id="GO:1904585">
    <property type="term" value="P:response to putrescine"/>
    <property type="evidence" value="ECO:0000270"/>
    <property type="project" value="UniProtKB"/>
</dbReference>
<dbReference type="GO" id="GO:0009751">
    <property type="term" value="P:response to salicylic acid"/>
    <property type="evidence" value="ECO:0000270"/>
    <property type="project" value="UniProtKB"/>
</dbReference>
<dbReference type="GO" id="GO:0009414">
    <property type="term" value="P:response to water deprivation"/>
    <property type="evidence" value="ECO:0000270"/>
    <property type="project" value="UniProtKB"/>
</dbReference>
<dbReference type="GO" id="GO:0009611">
    <property type="term" value="P:response to wounding"/>
    <property type="evidence" value="ECO:0000270"/>
    <property type="project" value="UniProtKB"/>
</dbReference>
<dbReference type="FunFam" id="2.70.98.20:FF:000004">
    <property type="entry name" value="Amine oxidase"/>
    <property type="match status" value="1"/>
</dbReference>
<dbReference type="FunFam" id="3.10.450.40:FF:000005">
    <property type="entry name" value="Amine oxidase"/>
    <property type="match status" value="1"/>
</dbReference>
<dbReference type="FunFam" id="3.10.450.40:FF:000024">
    <property type="entry name" value="Amine oxidase"/>
    <property type="match status" value="1"/>
</dbReference>
<dbReference type="Gene3D" id="3.10.450.40">
    <property type="match status" value="2"/>
</dbReference>
<dbReference type="Gene3D" id="2.70.98.20">
    <property type="entry name" value="Copper amine oxidase, catalytic domain"/>
    <property type="match status" value="1"/>
</dbReference>
<dbReference type="InterPro" id="IPR049947">
    <property type="entry name" value="Cu_Am_Ox_Cu-bd"/>
</dbReference>
<dbReference type="InterPro" id="IPR000269">
    <property type="entry name" value="Cu_amine_oxidase"/>
</dbReference>
<dbReference type="InterPro" id="IPR015798">
    <property type="entry name" value="Cu_amine_oxidase_C"/>
</dbReference>
<dbReference type="InterPro" id="IPR036460">
    <property type="entry name" value="Cu_amine_oxidase_C_sf"/>
</dbReference>
<dbReference type="InterPro" id="IPR016182">
    <property type="entry name" value="Cu_amine_oxidase_N-reg"/>
</dbReference>
<dbReference type="InterPro" id="IPR015800">
    <property type="entry name" value="Cu_amine_oxidase_N2"/>
</dbReference>
<dbReference type="InterPro" id="IPR015802">
    <property type="entry name" value="Cu_amine_oxidase_N3"/>
</dbReference>
<dbReference type="PANTHER" id="PTHR10638:SF69">
    <property type="entry name" value="AMINE OXIDASE [COPPER-CONTAINING] GAMMA 1-RELATED"/>
    <property type="match status" value="1"/>
</dbReference>
<dbReference type="PANTHER" id="PTHR10638">
    <property type="entry name" value="COPPER AMINE OXIDASE"/>
    <property type="match status" value="1"/>
</dbReference>
<dbReference type="Pfam" id="PF01179">
    <property type="entry name" value="Cu_amine_oxid"/>
    <property type="match status" value="1"/>
</dbReference>
<dbReference type="Pfam" id="PF02727">
    <property type="entry name" value="Cu_amine_oxidN2"/>
    <property type="match status" value="1"/>
</dbReference>
<dbReference type="Pfam" id="PF02728">
    <property type="entry name" value="Cu_amine_oxidN3"/>
    <property type="match status" value="1"/>
</dbReference>
<dbReference type="SUPFAM" id="SSF49998">
    <property type="entry name" value="Amine oxidase catalytic domain"/>
    <property type="match status" value="1"/>
</dbReference>
<dbReference type="SUPFAM" id="SSF54416">
    <property type="entry name" value="Amine oxidase N-terminal region"/>
    <property type="match status" value="2"/>
</dbReference>
<dbReference type="PROSITE" id="PS01165">
    <property type="entry name" value="COPPER_AMINE_OXID_2"/>
    <property type="match status" value="1"/>
</dbReference>
<organism>
    <name type="scientific">Arabidopsis thaliana</name>
    <name type="common">Mouse-ear cress</name>
    <dbReference type="NCBI Taxonomy" id="3702"/>
    <lineage>
        <taxon>Eukaryota</taxon>
        <taxon>Viridiplantae</taxon>
        <taxon>Streptophyta</taxon>
        <taxon>Embryophyta</taxon>
        <taxon>Tracheophyta</taxon>
        <taxon>Spermatophyta</taxon>
        <taxon>Magnoliopsida</taxon>
        <taxon>eudicotyledons</taxon>
        <taxon>Gunneridae</taxon>
        <taxon>Pentapetalae</taxon>
        <taxon>rosids</taxon>
        <taxon>malvids</taxon>
        <taxon>Brassicales</taxon>
        <taxon>Brassicaceae</taxon>
        <taxon>Camelineae</taxon>
        <taxon>Arabidopsis</taxon>
    </lineage>
</organism>
<name>CAOG2_ARATH</name>
<accession>Q9M2B9</accession>
<proteinExistence type="evidence at transcript level"/>